<accession>Q54Q05</accession>
<evidence type="ECO:0000250" key="1">
    <source>
        <dbReference type="UniProtKB" id="Q15369"/>
    </source>
</evidence>
<evidence type="ECO:0000305" key="2"/>
<keyword id="KW-0539">Nucleus</keyword>
<keyword id="KW-1185">Reference proteome</keyword>
<keyword id="KW-0804">Transcription</keyword>
<keyword id="KW-0805">Transcription regulation</keyword>
<keyword id="KW-0833">Ubl conjugation pathway</keyword>
<gene>
    <name type="primary">tceb1</name>
    <name type="ORF">DDB_G0284201</name>
</gene>
<comment type="function">
    <text evidence="1">SIII, also known as elongin, is a general transcription elongation factor that increases the RNA polymerase II transcription elongation past template-encoded arresting sites. Subunit A is transcriptionally active and its transcription activity is strongly enhanced by binding to the dimeric complex of the SIII regulatory subunits B and C (elongin BC complex) (By similarity).</text>
</comment>
<comment type="function">
    <text evidence="1">The elongin BC complex seems to be involved as an adapter protein in the proteasomal degradation of target proteins via different E3 ubiquitin ligase complexes.</text>
</comment>
<comment type="subcellular location">
    <subcellularLocation>
        <location evidence="2">Nucleus</location>
    </subcellularLocation>
</comment>
<comment type="similarity">
    <text evidence="2">Belongs to the SKP1 family.</text>
</comment>
<sequence>MSDNPDTHDLNSDVLRLYSSTGHEFVLSRKMSYVSGTIKSMLSGDNSNFMEDQNNEIRFREISTPVLEKVIQYFYFKNKYTNSTTDLPEFPINEKVVVDLLLAAHFLDT</sequence>
<proteinExistence type="inferred from homology"/>
<protein>
    <recommendedName>
        <fullName>Elongin-C</fullName>
    </recommendedName>
    <alternativeName>
        <fullName>RNA polymerase II transcription factor SIII subunit C</fullName>
    </alternativeName>
    <alternativeName>
        <fullName>Transcription elongation factor B polypeptide 1</fullName>
    </alternativeName>
</protein>
<dbReference type="EMBL" id="AAFI02000064">
    <property type="protein sequence ID" value="EAL65289.1"/>
    <property type="molecule type" value="Genomic_DNA"/>
</dbReference>
<dbReference type="RefSeq" id="XP_638640.1">
    <property type="nucleotide sequence ID" value="XM_633548.1"/>
</dbReference>
<dbReference type="SMR" id="Q54Q05"/>
<dbReference type="FunCoup" id="Q54Q05">
    <property type="interactions" value="411"/>
</dbReference>
<dbReference type="STRING" id="44689.Q54Q05"/>
<dbReference type="PaxDb" id="44689-DDB0238113"/>
<dbReference type="EnsemblProtists" id="EAL65289">
    <property type="protein sequence ID" value="EAL65289"/>
    <property type="gene ID" value="DDB_G0284201"/>
</dbReference>
<dbReference type="GeneID" id="8624471"/>
<dbReference type="KEGG" id="ddi:DDB_G0284201"/>
<dbReference type="dictyBase" id="DDB_G0284201"/>
<dbReference type="VEuPathDB" id="AmoebaDB:DDB_G0284201"/>
<dbReference type="eggNOG" id="KOG3473">
    <property type="taxonomic scope" value="Eukaryota"/>
</dbReference>
<dbReference type="HOGENOM" id="CLU_130038_3_0_1"/>
<dbReference type="InParanoid" id="Q54Q05"/>
<dbReference type="OMA" id="AMVSPII"/>
<dbReference type="PhylomeDB" id="Q54Q05"/>
<dbReference type="Reactome" id="R-DDI-6796648">
    <property type="pathway name" value="TP53 Regulates Transcription of DNA Repair Genes"/>
</dbReference>
<dbReference type="Reactome" id="R-DDI-8951664">
    <property type="pathway name" value="Neddylation"/>
</dbReference>
<dbReference type="Reactome" id="R-DDI-983168">
    <property type="pathway name" value="Antigen processing: Ubiquitination &amp; Proteasome degradation"/>
</dbReference>
<dbReference type="PRO" id="PR:Q54Q05"/>
<dbReference type="Proteomes" id="UP000002195">
    <property type="component" value="Chromosome 4"/>
</dbReference>
<dbReference type="GO" id="GO:0070449">
    <property type="term" value="C:elongin complex"/>
    <property type="evidence" value="ECO:0000318"/>
    <property type="project" value="GO_Central"/>
</dbReference>
<dbReference type="GO" id="GO:0030674">
    <property type="term" value="F:protein-macromolecule adaptor activity"/>
    <property type="evidence" value="ECO:0000318"/>
    <property type="project" value="GO_Central"/>
</dbReference>
<dbReference type="GO" id="GO:0006511">
    <property type="term" value="P:ubiquitin-dependent protein catabolic process"/>
    <property type="evidence" value="ECO:0000318"/>
    <property type="project" value="GO_Central"/>
</dbReference>
<dbReference type="CDD" id="cd18321">
    <property type="entry name" value="BTB_POZ_EloC"/>
    <property type="match status" value="1"/>
</dbReference>
<dbReference type="FunFam" id="3.30.710.10:FF:000035">
    <property type="entry name" value="Elongin C transcription elongation factor"/>
    <property type="match status" value="1"/>
</dbReference>
<dbReference type="Gene3D" id="3.30.710.10">
    <property type="entry name" value="Potassium Channel Kv1.1, Chain A"/>
    <property type="match status" value="1"/>
</dbReference>
<dbReference type="InterPro" id="IPR039948">
    <property type="entry name" value="ELC1"/>
</dbReference>
<dbReference type="InterPro" id="IPR001232">
    <property type="entry name" value="SKP1-like"/>
</dbReference>
<dbReference type="InterPro" id="IPR011333">
    <property type="entry name" value="SKP1/BTB/POZ_sf"/>
</dbReference>
<dbReference type="InterPro" id="IPR016073">
    <property type="entry name" value="Skp1_comp_POZ"/>
</dbReference>
<dbReference type="PANTHER" id="PTHR20648">
    <property type="entry name" value="ELONGIN-C"/>
    <property type="match status" value="1"/>
</dbReference>
<dbReference type="Pfam" id="PF03931">
    <property type="entry name" value="Skp1_POZ"/>
    <property type="match status" value="1"/>
</dbReference>
<dbReference type="SMART" id="SM00512">
    <property type="entry name" value="Skp1"/>
    <property type="match status" value="1"/>
</dbReference>
<dbReference type="SUPFAM" id="SSF54695">
    <property type="entry name" value="POZ domain"/>
    <property type="match status" value="1"/>
</dbReference>
<name>ELOC_DICDI</name>
<feature type="chain" id="PRO_0000333269" description="Elongin-C">
    <location>
        <begin position="1"/>
        <end position="109"/>
    </location>
</feature>
<organism>
    <name type="scientific">Dictyostelium discoideum</name>
    <name type="common">Social amoeba</name>
    <dbReference type="NCBI Taxonomy" id="44689"/>
    <lineage>
        <taxon>Eukaryota</taxon>
        <taxon>Amoebozoa</taxon>
        <taxon>Evosea</taxon>
        <taxon>Eumycetozoa</taxon>
        <taxon>Dictyostelia</taxon>
        <taxon>Dictyosteliales</taxon>
        <taxon>Dictyosteliaceae</taxon>
        <taxon>Dictyostelium</taxon>
    </lineage>
</organism>
<reference key="1">
    <citation type="journal article" date="2005" name="Nature">
        <title>The genome of the social amoeba Dictyostelium discoideum.</title>
        <authorList>
            <person name="Eichinger L."/>
            <person name="Pachebat J.A."/>
            <person name="Gloeckner G."/>
            <person name="Rajandream M.A."/>
            <person name="Sucgang R."/>
            <person name="Berriman M."/>
            <person name="Song J."/>
            <person name="Olsen R."/>
            <person name="Szafranski K."/>
            <person name="Xu Q."/>
            <person name="Tunggal B."/>
            <person name="Kummerfeld S."/>
            <person name="Madera M."/>
            <person name="Konfortov B.A."/>
            <person name="Rivero F."/>
            <person name="Bankier A.T."/>
            <person name="Lehmann R."/>
            <person name="Hamlin N."/>
            <person name="Davies R."/>
            <person name="Gaudet P."/>
            <person name="Fey P."/>
            <person name="Pilcher K."/>
            <person name="Chen G."/>
            <person name="Saunders D."/>
            <person name="Sodergren E.J."/>
            <person name="Davis P."/>
            <person name="Kerhornou A."/>
            <person name="Nie X."/>
            <person name="Hall N."/>
            <person name="Anjard C."/>
            <person name="Hemphill L."/>
            <person name="Bason N."/>
            <person name="Farbrother P."/>
            <person name="Desany B."/>
            <person name="Just E."/>
            <person name="Morio T."/>
            <person name="Rost R."/>
            <person name="Churcher C.M."/>
            <person name="Cooper J."/>
            <person name="Haydock S."/>
            <person name="van Driessche N."/>
            <person name="Cronin A."/>
            <person name="Goodhead I."/>
            <person name="Muzny D.M."/>
            <person name="Mourier T."/>
            <person name="Pain A."/>
            <person name="Lu M."/>
            <person name="Harper D."/>
            <person name="Lindsay R."/>
            <person name="Hauser H."/>
            <person name="James K.D."/>
            <person name="Quiles M."/>
            <person name="Madan Babu M."/>
            <person name="Saito T."/>
            <person name="Buchrieser C."/>
            <person name="Wardroper A."/>
            <person name="Felder M."/>
            <person name="Thangavelu M."/>
            <person name="Johnson D."/>
            <person name="Knights A."/>
            <person name="Loulseged H."/>
            <person name="Mungall K.L."/>
            <person name="Oliver K."/>
            <person name="Price C."/>
            <person name="Quail M.A."/>
            <person name="Urushihara H."/>
            <person name="Hernandez J."/>
            <person name="Rabbinowitsch E."/>
            <person name="Steffen D."/>
            <person name="Sanders M."/>
            <person name="Ma J."/>
            <person name="Kohara Y."/>
            <person name="Sharp S."/>
            <person name="Simmonds M.N."/>
            <person name="Spiegler S."/>
            <person name="Tivey A."/>
            <person name="Sugano S."/>
            <person name="White B."/>
            <person name="Walker D."/>
            <person name="Woodward J.R."/>
            <person name="Winckler T."/>
            <person name="Tanaka Y."/>
            <person name="Shaulsky G."/>
            <person name="Schleicher M."/>
            <person name="Weinstock G.M."/>
            <person name="Rosenthal A."/>
            <person name="Cox E.C."/>
            <person name="Chisholm R.L."/>
            <person name="Gibbs R.A."/>
            <person name="Loomis W.F."/>
            <person name="Platzer M."/>
            <person name="Kay R.R."/>
            <person name="Williams J.G."/>
            <person name="Dear P.H."/>
            <person name="Noegel A.A."/>
            <person name="Barrell B.G."/>
            <person name="Kuspa A."/>
        </authorList>
    </citation>
    <scope>NUCLEOTIDE SEQUENCE [LARGE SCALE GENOMIC DNA]</scope>
    <source>
        <strain>AX4</strain>
    </source>
</reference>